<comment type="function">
    <text evidence="1">This protein binds specifically to 23S rRNA; its binding is stimulated by other ribosomal proteins, e.g. L4, L17, and L20. It is important during the early stages of 50S assembly. It makes multiple contacts with different domains of the 23S rRNA in the assembled 50S subunit and ribosome (By similarity).</text>
</comment>
<comment type="function">
    <text evidence="1">The globular domain of the protein is located near the polypeptide exit tunnel on the outside of the subunit, while an extended beta-hairpin is found that lines the wall of the exit tunnel in the center of the 70S ribosome.</text>
</comment>
<comment type="subunit">
    <text evidence="1">Part of the 50S ribosomal subunit.</text>
</comment>
<comment type="similarity">
    <text evidence="1">Belongs to the universal ribosomal protein uL22 family.</text>
</comment>
<evidence type="ECO:0000255" key="1">
    <source>
        <dbReference type="HAMAP-Rule" id="MF_01331"/>
    </source>
</evidence>
<evidence type="ECO:0000305" key="2"/>
<feature type="chain" id="PRO_1000052663" description="Large ribosomal subunit protein uL22">
    <location>
        <begin position="1"/>
        <end position="114"/>
    </location>
</feature>
<accession>Q1JJ57</accession>
<organism>
    <name type="scientific">Streptococcus pyogenes serotype M2 (strain MGAS10270)</name>
    <dbReference type="NCBI Taxonomy" id="370552"/>
    <lineage>
        <taxon>Bacteria</taxon>
        <taxon>Bacillati</taxon>
        <taxon>Bacillota</taxon>
        <taxon>Bacilli</taxon>
        <taxon>Lactobacillales</taxon>
        <taxon>Streptococcaceae</taxon>
        <taxon>Streptococcus</taxon>
    </lineage>
</organism>
<proteinExistence type="inferred from homology"/>
<gene>
    <name evidence="1" type="primary">rplV</name>
    <name type="ordered locus">MGAS10270_Spy0051</name>
</gene>
<reference key="1">
    <citation type="journal article" date="2006" name="Proc. Natl. Acad. Sci. U.S.A.">
        <title>Molecular genetic anatomy of inter- and intraserotype variation in the human bacterial pathogen group A Streptococcus.</title>
        <authorList>
            <person name="Beres S.B."/>
            <person name="Richter E.W."/>
            <person name="Nagiec M.J."/>
            <person name="Sumby P."/>
            <person name="Porcella S.F."/>
            <person name="DeLeo F.R."/>
            <person name="Musser J.M."/>
        </authorList>
    </citation>
    <scope>NUCLEOTIDE SEQUENCE [LARGE SCALE GENOMIC DNA]</scope>
    <source>
        <strain>MGAS10270</strain>
    </source>
</reference>
<sequence>MAEITSAKAMARTVRVSPRKTRLVLDLIRGKKVADAIAILKFTPNKAARVIEKTLNSAIANAENNFGLEKANLVVSETFANEGPTMKRFRPRAKGSASPINKRTTHVTVVVSEK</sequence>
<protein>
    <recommendedName>
        <fullName evidence="1">Large ribosomal subunit protein uL22</fullName>
    </recommendedName>
    <alternativeName>
        <fullName evidence="2">50S ribosomal protein L22</fullName>
    </alternativeName>
</protein>
<name>RL22_STRPD</name>
<dbReference type="EMBL" id="CP000260">
    <property type="protein sequence ID" value="ABF33116.1"/>
    <property type="molecule type" value="Genomic_DNA"/>
</dbReference>
<dbReference type="RefSeq" id="WP_002986651.1">
    <property type="nucleotide sequence ID" value="NZ_CVUH01000001.1"/>
</dbReference>
<dbReference type="SMR" id="Q1JJ57"/>
<dbReference type="GeneID" id="83703909"/>
<dbReference type="KEGG" id="sph:MGAS10270_Spy0051"/>
<dbReference type="HOGENOM" id="CLU_083987_3_3_9"/>
<dbReference type="Proteomes" id="UP000002436">
    <property type="component" value="Chromosome"/>
</dbReference>
<dbReference type="GO" id="GO:0022625">
    <property type="term" value="C:cytosolic large ribosomal subunit"/>
    <property type="evidence" value="ECO:0007669"/>
    <property type="project" value="TreeGrafter"/>
</dbReference>
<dbReference type="GO" id="GO:0019843">
    <property type="term" value="F:rRNA binding"/>
    <property type="evidence" value="ECO:0007669"/>
    <property type="project" value="UniProtKB-UniRule"/>
</dbReference>
<dbReference type="GO" id="GO:0003735">
    <property type="term" value="F:structural constituent of ribosome"/>
    <property type="evidence" value="ECO:0007669"/>
    <property type="project" value="InterPro"/>
</dbReference>
<dbReference type="GO" id="GO:0006412">
    <property type="term" value="P:translation"/>
    <property type="evidence" value="ECO:0007669"/>
    <property type="project" value="UniProtKB-UniRule"/>
</dbReference>
<dbReference type="CDD" id="cd00336">
    <property type="entry name" value="Ribosomal_L22"/>
    <property type="match status" value="1"/>
</dbReference>
<dbReference type="FunFam" id="3.90.470.10:FF:000001">
    <property type="entry name" value="50S ribosomal protein L22"/>
    <property type="match status" value="1"/>
</dbReference>
<dbReference type="Gene3D" id="3.90.470.10">
    <property type="entry name" value="Ribosomal protein L22/L17"/>
    <property type="match status" value="1"/>
</dbReference>
<dbReference type="HAMAP" id="MF_01331_B">
    <property type="entry name" value="Ribosomal_uL22_B"/>
    <property type="match status" value="1"/>
</dbReference>
<dbReference type="InterPro" id="IPR001063">
    <property type="entry name" value="Ribosomal_uL22"/>
</dbReference>
<dbReference type="InterPro" id="IPR005727">
    <property type="entry name" value="Ribosomal_uL22_bac/chlpt-type"/>
</dbReference>
<dbReference type="InterPro" id="IPR047867">
    <property type="entry name" value="Ribosomal_uL22_bac/org-type"/>
</dbReference>
<dbReference type="InterPro" id="IPR018260">
    <property type="entry name" value="Ribosomal_uL22_CS"/>
</dbReference>
<dbReference type="InterPro" id="IPR036394">
    <property type="entry name" value="Ribosomal_uL22_sf"/>
</dbReference>
<dbReference type="NCBIfam" id="TIGR01044">
    <property type="entry name" value="rplV_bact"/>
    <property type="match status" value="1"/>
</dbReference>
<dbReference type="PANTHER" id="PTHR13501">
    <property type="entry name" value="CHLOROPLAST 50S RIBOSOMAL PROTEIN L22-RELATED"/>
    <property type="match status" value="1"/>
</dbReference>
<dbReference type="PANTHER" id="PTHR13501:SF8">
    <property type="entry name" value="LARGE RIBOSOMAL SUBUNIT PROTEIN UL22M"/>
    <property type="match status" value="1"/>
</dbReference>
<dbReference type="Pfam" id="PF00237">
    <property type="entry name" value="Ribosomal_L22"/>
    <property type="match status" value="1"/>
</dbReference>
<dbReference type="SUPFAM" id="SSF54843">
    <property type="entry name" value="Ribosomal protein L22"/>
    <property type="match status" value="1"/>
</dbReference>
<dbReference type="PROSITE" id="PS00464">
    <property type="entry name" value="RIBOSOMAL_L22"/>
    <property type="match status" value="1"/>
</dbReference>
<keyword id="KW-0687">Ribonucleoprotein</keyword>
<keyword id="KW-0689">Ribosomal protein</keyword>
<keyword id="KW-0694">RNA-binding</keyword>
<keyword id="KW-0699">rRNA-binding</keyword>